<gene>
    <name evidence="1" type="primary">pepB</name>
    <name type="ordered locus">YPO2889</name>
    <name type="ordered locus">y1342</name>
    <name type="ordered locus">YP_2566</name>
</gene>
<protein>
    <recommendedName>
        <fullName evidence="1">Peptidase B</fullName>
        <ecNumber evidence="1">3.4.11.23</ecNumber>
    </recommendedName>
    <alternativeName>
        <fullName evidence="1">Aminopeptidase B</fullName>
    </alternativeName>
</protein>
<organism>
    <name type="scientific">Yersinia pestis</name>
    <dbReference type="NCBI Taxonomy" id="632"/>
    <lineage>
        <taxon>Bacteria</taxon>
        <taxon>Pseudomonadati</taxon>
        <taxon>Pseudomonadota</taxon>
        <taxon>Gammaproteobacteria</taxon>
        <taxon>Enterobacterales</taxon>
        <taxon>Yersiniaceae</taxon>
        <taxon>Yersinia</taxon>
    </lineage>
</organism>
<name>PEPB_YERPE</name>
<keyword id="KW-0002">3D-structure</keyword>
<keyword id="KW-0031">Aminopeptidase</keyword>
<keyword id="KW-0963">Cytoplasm</keyword>
<keyword id="KW-0378">Hydrolase</keyword>
<keyword id="KW-0464">Manganese</keyword>
<keyword id="KW-0479">Metal-binding</keyword>
<keyword id="KW-0645">Protease</keyword>
<keyword id="KW-1185">Reference proteome</keyword>
<proteinExistence type="evidence at protein level"/>
<feature type="chain" id="PRO_0000165851" description="Peptidase B">
    <location>
        <begin position="1"/>
        <end position="432"/>
    </location>
</feature>
<feature type="active site" evidence="1">
    <location>
        <position position="208"/>
    </location>
</feature>
<feature type="active site" evidence="1">
    <location>
        <position position="282"/>
    </location>
</feature>
<feature type="binding site" evidence="1">
    <location>
        <position position="196"/>
    </location>
    <ligand>
        <name>Mn(2+)</name>
        <dbReference type="ChEBI" id="CHEBI:29035"/>
        <label>2</label>
    </ligand>
</feature>
<feature type="binding site" evidence="1">
    <location>
        <position position="201"/>
    </location>
    <ligand>
        <name>Mn(2+)</name>
        <dbReference type="ChEBI" id="CHEBI:29035"/>
        <label>1</label>
    </ligand>
</feature>
<feature type="binding site" evidence="1">
    <location>
        <position position="201"/>
    </location>
    <ligand>
        <name>Mn(2+)</name>
        <dbReference type="ChEBI" id="CHEBI:29035"/>
        <label>2</label>
    </ligand>
</feature>
<feature type="binding site" evidence="1">
    <location>
        <position position="219"/>
    </location>
    <ligand>
        <name>Mn(2+)</name>
        <dbReference type="ChEBI" id="CHEBI:29035"/>
        <label>2</label>
    </ligand>
</feature>
<feature type="binding site" evidence="1">
    <location>
        <position position="278"/>
    </location>
    <ligand>
        <name>Mn(2+)</name>
        <dbReference type="ChEBI" id="CHEBI:29035"/>
        <label>1</label>
    </ligand>
</feature>
<feature type="binding site" evidence="1">
    <location>
        <position position="280"/>
    </location>
    <ligand>
        <name>Mn(2+)</name>
        <dbReference type="ChEBI" id="CHEBI:29035"/>
        <label>1</label>
    </ligand>
</feature>
<feature type="binding site" evidence="1">
    <location>
        <position position="280"/>
    </location>
    <ligand>
        <name>Mn(2+)</name>
        <dbReference type="ChEBI" id="CHEBI:29035"/>
        <label>2</label>
    </ligand>
</feature>
<feature type="strand" evidence="2">
    <location>
        <begin position="6"/>
        <end position="13"/>
    </location>
</feature>
<feature type="helix" evidence="2">
    <location>
        <begin position="17"/>
        <end position="19"/>
    </location>
</feature>
<feature type="strand" evidence="2">
    <location>
        <begin position="24"/>
        <end position="27"/>
    </location>
</feature>
<feature type="strand" evidence="2">
    <location>
        <begin position="32"/>
        <end position="35"/>
    </location>
</feature>
<feature type="helix" evidence="2">
    <location>
        <begin position="41"/>
        <end position="54"/>
    </location>
</feature>
<feature type="strand" evidence="2">
    <location>
        <begin position="59"/>
        <end position="62"/>
    </location>
</feature>
<feature type="helix" evidence="2">
    <location>
        <begin position="69"/>
        <end position="79"/>
    </location>
</feature>
<feature type="strand" evidence="2">
    <location>
        <begin position="87"/>
        <end position="89"/>
    </location>
</feature>
<feature type="helix" evidence="2">
    <location>
        <begin position="95"/>
        <end position="116"/>
    </location>
</feature>
<feature type="helix" evidence="2">
    <location>
        <begin position="119"/>
        <end position="121"/>
    </location>
</feature>
<feature type="helix" evidence="2">
    <location>
        <begin position="124"/>
        <end position="138"/>
    </location>
</feature>
<feature type="strand" evidence="2">
    <location>
        <begin position="143"/>
        <end position="149"/>
    </location>
</feature>
<feature type="helix" evidence="2">
    <location>
        <begin position="151"/>
        <end position="155"/>
    </location>
</feature>
<feature type="helix" evidence="2">
    <location>
        <begin position="159"/>
        <end position="164"/>
    </location>
</feature>
<feature type="turn" evidence="2">
    <location>
        <begin position="165"/>
        <end position="167"/>
    </location>
</feature>
<feature type="strand" evidence="2">
    <location>
        <begin position="173"/>
        <end position="179"/>
    </location>
</feature>
<feature type="strand" evidence="2">
    <location>
        <begin position="189"/>
        <end position="201"/>
    </location>
</feature>
<feature type="helix" evidence="2">
    <location>
        <begin position="215"/>
        <end position="218"/>
    </location>
</feature>
<feature type="helix" evidence="2">
    <location>
        <begin position="221"/>
        <end position="235"/>
    </location>
</feature>
<feature type="strand" evidence="2">
    <location>
        <begin position="240"/>
        <end position="251"/>
    </location>
</feature>
<feature type="helix" evidence="2">
    <location>
        <begin position="255"/>
        <end position="257"/>
    </location>
</feature>
<feature type="strand" evidence="2">
    <location>
        <begin position="263"/>
        <end position="265"/>
    </location>
</feature>
<feature type="strand" evidence="2">
    <location>
        <begin position="271"/>
        <end position="273"/>
    </location>
</feature>
<feature type="helix" evidence="2">
    <location>
        <begin position="281"/>
        <end position="293"/>
    </location>
</feature>
<feature type="turn" evidence="2">
    <location>
        <begin position="294"/>
        <end position="296"/>
    </location>
</feature>
<feature type="strand" evidence="2">
    <location>
        <begin position="298"/>
        <end position="305"/>
    </location>
</feature>
<feature type="strand" evidence="2">
    <location>
        <begin position="319"/>
        <end position="322"/>
    </location>
</feature>
<feature type="helix" evidence="2">
    <location>
        <begin position="326"/>
        <end position="338"/>
    </location>
</feature>
<feature type="strand" evidence="2">
    <location>
        <begin position="343"/>
        <end position="345"/>
    </location>
</feature>
<feature type="helix" evidence="2">
    <location>
        <begin position="350"/>
        <end position="354"/>
    </location>
</feature>
<feature type="strand" evidence="2">
    <location>
        <begin position="359"/>
        <end position="365"/>
    </location>
</feature>
<feature type="turn" evidence="2">
    <location>
        <begin position="368"/>
        <end position="370"/>
    </location>
</feature>
<feature type="helix" evidence="2">
    <location>
        <begin position="375"/>
        <end position="383"/>
    </location>
</feature>
<feature type="turn" evidence="2">
    <location>
        <begin position="387"/>
        <end position="390"/>
    </location>
</feature>
<feature type="strand" evidence="2">
    <location>
        <begin position="391"/>
        <end position="397"/>
    </location>
</feature>
<feature type="strand" evidence="2">
    <location>
        <begin position="401"/>
        <end position="405"/>
    </location>
</feature>
<feature type="strand" evidence="2">
    <location>
        <begin position="412"/>
        <end position="414"/>
    </location>
</feature>
<feature type="helix" evidence="2">
    <location>
        <begin position="419"/>
        <end position="429"/>
    </location>
</feature>
<dbReference type="EC" id="3.4.11.23" evidence="1"/>
<dbReference type="EMBL" id="AL590842">
    <property type="protein sequence ID" value="CAL21500.1"/>
    <property type="molecule type" value="Genomic_DNA"/>
</dbReference>
<dbReference type="EMBL" id="AE009952">
    <property type="protein sequence ID" value="AAM84915.1"/>
    <property type="molecule type" value="Genomic_DNA"/>
</dbReference>
<dbReference type="EMBL" id="AE017042">
    <property type="protein sequence ID" value="AAS62762.1"/>
    <property type="molecule type" value="Genomic_DNA"/>
</dbReference>
<dbReference type="PIR" id="AI0351">
    <property type="entry name" value="AI0351"/>
</dbReference>
<dbReference type="RefSeq" id="WP_002209829.1">
    <property type="nucleotide sequence ID" value="NZ_WUCM01000090.1"/>
</dbReference>
<dbReference type="RefSeq" id="YP_002347823.1">
    <property type="nucleotide sequence ID" value="NC_003143.1"/>
</dbReference>
<dbReference type="PDB" id="6CXD">
    <property type="method" value="X-ray"/>
    <property type="resolution" value="2.75 A"/>
    <property type="chains" value="A=1-432"/>
</dbReference>
<dbReference type="PDBsum" id="6CXD"/>
<dbReference type="SMR" id="P58475"/>
<dbReference type="IntAct" id="P58475">
    <property type="interactions" value="2"/>
</dbReference>
<dbReference type="STRING" id="214092.YPO2889"/>
<dbReference type="MEROPS" id="M17.004"/>
<dbReference type="PaxDb" id="214092-YPO2889"/>
<dbReference type="DNASU" id="1146289"/>
<dbReference type="EnsemblBacteria" id="AAS62762">
    <property type="protein sequence ID" value="AAS62762"/>
    <property type="gene ID" value="YP_2566"/>
</dbReference>
<dbReference type="GeneID" id="57975846"/>
<dbReference type="KEGG" id="ype:YPO2889"/>
<dbReference type="KEGG" id="ypk:y1342"/>
<dbReference type="KEGG" id="ypm:YP_2566"/>
<dbReference type="PATRIC" id="fig|214092.21.peg.3339"/>
<dbReference type="eggNOG" id="COG0260">
    <property type="taxonomic scope" value="Bacteria"/>
</dbReference>
<dbReference type="HOGENOM" id="CLU_013734_7_1_6"/>
<dbReference type="OMA" id="FYQGFYT"/>
<dbReference type="OrthoDB" id="9809354at2"/>
<dbReference type="Proteomes" id="UP000000815">
    <property type="component" value="Chromosome"/>
</dbReference>
<dbReference type="Proteomes" id="UP000001019">
    <property type="component" value="Chromosome"/>
</dbReference>
<dbReference type="Proteomes" id="UP000002490">
    <property type="component" value="Chromosome"/>
</dbReference>
<dbReference type="GO" id="GO:0005737">
    <property type="term" value="C:cytoplasm"/>
    <property type="evidence" value="ECO:0000318"/>
    <property type="project" value="GO_Central"/>
</dbReference>
<dbReference type="GO" id="GO:0030145">
    <property type="term" value="F:manganese ion binding"/>
    <property type="evidence" value="ECO:0007669"/>
    <property type="project" value="UniProtKB-UniRule"/>
</dbReference>
<dbReference type="GO" id="GO:0070006">
    <property type="term" value="F:metalloaminopeptidase activity"/>
    <property type="evidence" value="ECO:0007669"/>
    <property type="project" value="InterPro"/>
</dbReference>
<dbReference type="GO" id="GO:0008233">
    <property type="term" value="F:peptidase activity"/>
    <property type="evidence" value="ECO:0000318"/>
    <property type="project" value="GO_Central"/>
</dbReference>
<dbReference type="GO" id="GO:0006508">
    <property type="term" value="P:proteolysis"/>
    <property type="evidence" value="ECO:0000318"/>
    <property type="project" value="GO_Central"/>
</dbReference>
<dbReference type="CDD" id="cd00433">
    <property type="entry name" value="Peptidase_M17"/>
    <property type="match status" value="1"/>
</dbReference>
<dbReference type="FunFam" id="3.40.630.10:FF:000037">
    <property type="entry name" value="Peptidase B"/>
    <property type="match status" value="1"/>
</dbReference>
<dbReference type="Gene3D" id="3.40.630.10">
    <property type="entry name" value="Zn peptidases"/>
    <property type="match status" value="1"/>
</dbReference>
<dbReference type="HAMAP" id="MF_00504">
    <property type="entry name" value="Aminopeptidase_M17"/>
    <property type="match status" value="1"/>
</dbReference>
<dbReference type="InterPro" id="IPR011356">
    <property type="entry name" value="Leucine_aapep/pepB"/>
</dbReference>
<dbReference type="InterPro" id="IPR047620">
    <property type="entry name" value="M17_PepB-like_N"/>
</dbReference>
<dbReference type="InterPro" id="IPR008330">
    <property type="entry name" value="Pept_M17_PepB"/>
</dbReference>
<dbReference type="InterPro" id="IPR000819">
    <property type="entry name" value="Peptidase_M17_C"/>
</dbReference>
<dbReference type="NCBIfam" id="NF003450">
    <property type="entry name" value="PRK05015.1"/>
    <property type="match status" value="1"/>
</dbReference>
<dbReference type="PANTHER" id="PTHR11963">
    <property type="entry name" value="LEUCINE AMINOPEPTIDASE-RELATED"/>
    <property type="match status" value="1"/>
</dbReference>
<dbReference type="PANTHER" id="PTHR11963:SF20">
    <property type="entry name" value="PEPTIDASE B"/>
    <property type="match status" value="1"/>
</dbReference>
<dbReference type="Pfam" id="PF12404">
    <property type="entry name" value="DUF3663"/>
    <property type="match status" value="1"/>
</dbReference>
<dbReference type="Pfam" id="PF00883">
    <property type="entry name" value="Peptidase_M17"/>
    <property type="match status" value="1"/>
</dbReference>
<dbReference type="PIRSF" id="PIRSF036388">
    <property type="entry name" value="Ctsl_amnpptdse_B"/>
    <property type="match status" value="1"/>
</dbReference>
<dbReference type="PRINTS" id="PR00481">
    <property type="entry name" value="LAMNOPPTDASE"/>
</dbReference>
<dbReference type="SUPFAM" id="SSF53187">
    <property type="entry name" value="Zn-dependent exopeptidases"/>
    <property type="match status" value="1"/>
</dbReference>
<dbReference type="PROSITE" id="PS00631">
    <property type="entry name" value="CYTOSOL_AP"/>
    <property type="match status" value="1"/>
</dbReference>
<comment type="function">
    <text evidence="1">Probably plays an important role in intracellular peptide degradation.</text>
</comment>
<comment type="catalytic activity">
    <reaction evidence="1">
        <text>Release of an N-terminal amino acid, Xaa, from a peptide or arylamide. Xaa is preferably Glu or Asp but may be other amino acids, including Leu, Met, His, Cys and Gln.</text>
        <dbReference type="EC" id="3.4.11.23"/>
    </reaction>
</comment>
<comment type="cofactor">
    <cofactor evidence="1">
        <name>Mn(2+)</name>
        <dbReference type="ChEBI" id="CHEBI:29035"/>
    </cofactor>
    <text evidence="1">Binds 2 manganese ions per subunit.</text>
</comment>
<comment type="subunit">
    <text evidence="1">Homohexamer.</text>
</comment>
<comment type="subcellular location">
    <subcellularLocation>
        <location evidence="1">Cytoplasm</location>
    </subcellularLocation>
</comment>
<comment type="similarity">
    <text evidence="1">Belongs to the peptidase M17 family.</text>
</comment>
<accession>P58475</accession>
<accession>Q0WD15</accession>
<evidence type="ECO:0000255" key="1">
    <source>
        <dbReference type="HAMAP-Rule" id="MF_00504"/>
    </source>
</evidence>
<evidence type="ECO:0007829" key="2">
    <source>
        <dbReference type="PDB" id="6CXD"/>
    </source>
</evidence>
<reference key="1">
    <citation type="journal article" date="2001" name="Nature">
        <title>Genome sequence of Yersinia pestis, the causative agent of plague.</title>
        <authorList>
            <person name="Parkhill J."/>
            <person name="Wren B.W."/>
            <person name="Thomson N.R."/>
            <person name="Titball R.W."/>
            <person name="Holden M.T.G."/>
            <person name="Prentice M.B."/>
            <person name="Sebaihia M."/>
            <person name="James K.D."/>
            <person name="Churcher C.M."/>
            <person name="Mungall K.L."/>
            <person name="Baker S."/>
            <person name="Basham D."/>
            <person name="Bentley S.D."/>
            <person name="Brooks K."/>
            <person name="Cerdeno-Tarraga A.-M."/>
            <person name="Chillingworth T."/>
            <person name="Cronin A."/>
            <person name="Davies R.M."/>
            <person name="Davis P."/>
            <person name="Dougan G."/>
            <person name="Feltwell T."/>
            <person name="Hamlin N."/>
            <person name="Holroyd S."/>
            <person name="Jagels K."/>
            <person name="Karlyshev A.V."/>
            <person name="Leather S."/>
            <person name="Moule S."/>
            <person name="Oyston P.C.F."/>
            <person name="Quail M.A."/>
            <person name="Rutherford K.M."/>
            <person name="Simmonds M."/>
            <person name="Skelton J."/>
            <person name="Stevens K."/>
            <person name="Whitehead S."/>
            <person name="Barrell B.G."/>
        </authorList>
    </citation>
    <scope>NUCLEOTIDE SEQUENCE [LARGE SCALE GENOMIC DNA]</scope>
    <source>
        <strain>CO-92 / Biovar Orientalis</strain>
    </source>
</reference>
<reference key="2">
    <citation type="journal article" date="2002" name="J. Bacteriol.">
        <title>Genome sequence of Yersinia pestis KIM.</title>
        <authorList>
            <person name="Deng W."/>
            <person name="Burland V."/>
            <person name="Plunkett G. III"/>
            <person name="Boutin A."/>
            <person name="Mayhew G.F."/>
            <person name="Liss P."/>
            <person name="Perna N.T."/>
            <person name="Rose D.J."/>
            <person name="Mau B."/>
            <person name="Zhou S."/>
            <person name="Schwartz D.C."/>
            <person name="Fetherston J.D."/>
            <person name="Lindler L.E."/>
            <person name="Brubaker R.R."/>
            <person name="Plano G.V."/>
            <person name="Straley S.C."/>
            <person name="McDonough K.A."/>
            <person name="Nilles M.L."/>
            <person name="Matson J.S."/>
            <person name="Blattner F.R."/>
            <person name="Perry R.D."/>
        </authorList>
    </citation>
    <scope>NUCLEOTIDE SEQUENCE [LARGE SCALE GENOMIC DNA]</scope>
    <source>
        <strain>KIM10+ / Biovar Mediaevalis</strain>
    </source>
</reference>
<reference key="3">
    <citation type="journal article" date="2004" name="DNA Res.">
        <title>Complete genome sequence of Yersinia pestis strain 91001, an isolate avirulent to humans.</title>
        <authorList>
            <person name="Song Y."/>
            <person name="Tong Z."/>
            <person name="Wang J."/>
            <person name="Wang L."/>
            <person name="Guo Z."/>
            <person name="Han Y."/>
            <person name="Zhang J."/>
            <person name="Pei D."/>
            <person name="Zhou D."/>
            <person name="Qin H."/>
            <person name="Pang X."/>
            <person name="Han Y."/>
            <person name="Zhai J."/>
            <person name="Li M."/>
            <person name="Cui B."/>
            <person name="Qi Z."/>
            <person name="Jin L."/>
            <person name="Dai R."/>
            <person name="Chen F."/>
            <person name="Li S."/>
            <person name="Ye C."/>
            <person name="Du Z."/>
            <person name="Lin W."/>
            <person name="Wang J."/>
            <person name="Yu J."/>
            <person name="Yang H."/>
            <person name="Wang J."/>
            <person name="Huang P."/>
            <person name="Yang R."/>
        </authorList>
    </citation>
    <scope>NUCLEOTIDE SEQUENCE [LARGE SCALE GENOMIC DNA]</scope>
    <source>
        <strain>91001 / Biovar Mediaevalis</strain>
    </source>
</reference>
<sequence>MTTEIMQISLSHNPADARWGEKALISTNDQGVTIHLTSHDQLGGIQRAARKIDGQGIKQVKLAGEGWGLEQSWAFWQGFRGPKGQRSVVWAELPANEKTELEQRLKIIDWVRDTINAPAEDLGPEQLAKNAIDLLCAVSCDAVSYRITKGEDLREQNYAGIYTVGRGSDRAPVLLALDYNPTGNPDAPVMACLVGKGITFDSGGYSLKQSAFMDSMKSDMGGAATLTGALALAAARGLKERVKLYLCCADNMVSGNAFKLGDIIRYRNGKTVEIMNTDAEGRLVLADGLIDASEQNAPLIIDAATLTGAAKTALGNDYHALFSFDDELAQALLNSAHSEHELFWRLPLAEFHRSQLPSNFAELNNVAGGAYSAGASTAAAFLSHFVKNYQQGWLHIDCSATYRKSAVDQWSAGATGLGVRTVANLLLAQAKQ</sequence>